<feature type="chain" id="PRO_1000131739" description="Co-chaperone protein HscB">
    <location>
        <begin position="1"/>
        <end position="171"/>
    </location>
</feature>
<feature type="domain" description="J" evidence="1">
    <location>
        <begin position="2"/>
        <end position="74"/>
    </location>
</feature>
<organism>
    <name type="scientific">Escherichia coli (strain SMS-3-5 / SECEC)</name>
    <dbReference type="NCBI Taxonomy" id="439855"/>
    <lineage>
        <taxon>Bacteria</taxon>
        <taxon>Pseudomonadati</taxon>
        <taxon>Pseudomonadota</taxon>
        <taxon>Gammaproteobacteria</taxon>
        <taxon>Enterobacterales</taxon>
        <taxon>Enterobacteriaceae</taxon>
        <taxon>Escherichia</taxon>
    </lineage>
</organism>
<accession>B1LNI2</accession>
<evidence type="ECO:0000255" key="1">
    <source>
        <dbReference type="HAMAP-Rule" id="MF_00682"/>
    </source>
</evidence>
<keyword id="KW-0143">Chaperone</keyword>
<name>HSCB_ECOSM</name>
<protein>
    <recommendedName>
        <fullName evidence="1">Co-chaperone protein HscB</fullName>
    </recommendedName>
    <alternativeName>
        <fullName evidence="1">Hsc20</fullName>
    </alternativeName>
</protein>
<comment type="function">
    <text evidence="1">Co-chaperone involved in the maturation of iron-sulfur cluster-containing proteins. Seems to help targeting proteins to be folded toward HscA.</text>
</comment>
<comment type="subunit">
    <text evidence="1">Interacts with HscA and stimulates its ATPase activity. Interacts with IscU.</text>
</comment>
<comment type="similarity">
    <text evidence="1">Belongs to the HscB family.</text>
</comment>
<sequence>MDYFTLFGLPARYQLDTQALSLRFQDLQRQYHPDKFASGSQAEQLAAVQQSATINQAWQTLRHPLMRAEYLLSLHGFDLACEQHTVRDTAFLMEQLELREELDEIEQAKDEARLESFIKRVKKMFDTRHQLMVEQLDNETWDAAADTVRKLRFLDKLRSSAEQLEEKLLDF</sequence>
<reference key="1">
    <citation type="journal article" date="2008" name="J. Bacteriol.">
        <title>Insights into the environmental resistance gene pool from the genome sequence of the multidrug-resistant environmental isolate Escherichia coli SMS-3-5.</title>
        <authorList>
            <person name="Fricke W.F."/>
            <person name="Wright M.S."/>
            <person name="Lindell A.H."/>
            <person name="Harkins D.M."/>
            <person name="Baker-Austin C."/>
            <person name="Ravel J."/>
            <person name="Stepanauskas R."/>
        </authorList>
    </citation>
    <scope>NUCLEOTIDE SEQUENCE [LARGE SCALE GENOMIC DNA]</scope>
    <source>
        <strain>SMS-3-5 / SECEC</strain>
    </source>
</reference>
<proteinExistence type="inferred from homology"/>
<dbReference type="EMBL" id="CP000970">
    <property type="protein sequence ID" value="ACB17367.1"/>
    <property type="molecule type" value="Genomic_DNA"/>
</dbReference>
<dbReference type="RefSeq" id="WP_000384408.1">
    <property type="nucleotide sequence ID" value="NC_010498.1"/>
</dbReference>
<dbReference type="BMRB" id="B1LNI2"/>
<dbReference type="SMR" id="B1LNI2"/>
<dbReference type="KEGG" id="ecm:EcSMS35_2679"/>
<dbReference type="HOGENOM" id="CLU_068529_2_0_6"/>
<dbReference type="Proteomes" id="UP000007011">
    <property type="component" value="Chromosome"/>
</dbReference>
<dbReference type="GO" id="GO:1990230">
    <property type="term" value="C:iron-sulfur cluster transfer complex"/>
    <property type="evidence" value="ECO:0007669"/>
    <property type="project" value="TreeGrafter"/>
</dbReference>
<dbReference type="GO" id="GO:0001671">
    <property type="term" value="F:ATPase activator activity"/>
    <property type="evidence" value="ECO:0007669"/>
    <property type="project" value="InterPro"/>
</dbReference>
<dbReference type="GO" id="GO:0051087">
    <property type="term" value="F:protein-folding chaperone binding"/>
    <property type="evidence" value="ECO:0007669"/>
    <property type="project" value="InterPro"/>
</dbReference>
<dbReference type="GO" id="GO:0044571">
    <property type="term" value="P:[2Fe-2S] cluster assembly"/>
    <property type="evidence" value="ECO:0007669"/>
    <property type="project" value="InterPro"/>
</dbReference>
<dbReference type="GO" id="GO:0051259">
    <property type="term" value="P:protein complex oligomerization"/>
    <property type="evidence" value="ECO:0007669"/>
    <property type="project" value="InterPro"/>
</dbReference>
<dbReference type="GO" id="GO:0006457">
    <property type="term" value="P:protein folding"/>
    <property type="evidence" value="ECO:0007669"/>
    <property type="project" value="UniProtKB-UniRule"/>
</dbReference>
<dbReference type="CDD" id="cd06257">
    <property type="entry name" value="DnaJ"/>
    <property type="match status" value="1"/>
</dbReference>
<dbReference type="FunFam" id="1.10.287.110:FF:000008">
    <property type="entry name" value="Co-chaperone protein HscB"/>
    <property type="match status" value="1"/>
</dbReference>
<dbReference type="FunFam" id="1.20.1280.20:FF:000001">
    <property type="entry name" value="Co-chaperone protein HscB"/>
    <property type="match status" value="1"/>
</dbReference>
<dbReference type="Gene3D" id="1.10.287.110">
    <property type="entry name" value="DnaJ domain"/>
    <property type="match status" value="1"/>
</dbReference>
<dbReference type="Gene3D" id="1.20.1280.20">
    <property type="entry name" value="HscB, C-terminal domain"/>
    <property type="match status" value="1"/>
</dbReference>
<dbReference type="HAMAP" id="MF_00682">
    <property type="entry name" value="HscB"/>
    <property type="match status" value="1"/>
</dbReference>
<dbReference type="InterPro" id="IPR001623">
    <property type="entry name" value="DnaJ_domain"/>
</dbReference>
<dbReference type="InterPro" id="IPR004640">
    <property type="entry name" value="HscB"/>
</dbReference>
<dbReference type="InterPro" id="IPR036386">
    <property type="entry name" value="HscB_C_sf"/>
</dbReference>
<dbReference type="InterPro" id="IPR009073">
    <property type="entry name" value="HscB_oligo_C"/>
</dbReference>
<dbReference type="InterPro" id="IPR036869">
    <property type="entry name" value="J_dom_sf"/>
</dbReference>
<dbReference type="NCBIfam" id="TIGR00714">
    <property type="entry name" value="hscB"/>
    <property type="match status" value="1"/>
</dbReference>
<dbReference type="NCBIfam" id="NF003449">
    <property type="entry name" value="PRK05014.1"/>
    <property type="match status" value="1"/>
</dbReference>
<dbReference type="PANTHER" id="PTHR14021">
    <property type="entry name" value="IRON-SULFUR CLUSTER CO-CHAPERONE PROTEIN HSCB"/>
    <property type="match status" value="1"/>
</dbReference>
<dbReference type="PANTHER" id="PTHR14021:SF15">
    <property type="entry name" value="IRON-SULFUR CLUSTER CO-CHAPERONE PROTEIN HSCB"/>
    <property type="match status" value="1"/>
</dbReference>
<dbReference type="Pfam" id="PF07743">
    <property type="entry name" value="HSCB_C"/>
    <property type="match status" value="1"/>
</dbReference>
<dbReference type="SMART" id="SM00271">
    <property type="entry name" value="DnaJ"/>
    <property type="match status" value="1"/>
</dbReference>
<dbReference type="SUPFAM" id="SSF46565">
    <property type="entry name" value="Chaperone J-domain"/>
    <property type="match status" value="1"/>
</dbReference>
<dbReference type="SUPFAM" id="SSF47144">
    <property type="entry name" value="HSC20 (HSCB), C-terminal oligomerisation domain"/>
    <property type="match status" value="1"/>
</dbReference>
<dbReference type="PROSITE" id="PS50076">
    <property type="entry name" value="DNAJ_2"/>
    <property type="match status" value="1"/>
</dbReference>
<gene>
    <name evidence="1" type="primary">hscB</name>
    <name type="ordered locus">EcSMS35_2679</name>
</gene>